<reference key="1">
    <citation type="submission" date="2006-06" db="EMBL/GenBank/DDBJ databases">
        <authorList>
            <consortium name="NIH - Mammalian Gene Collection (MGC) project"/>
        </authorList>
    </citation>
    <scope>NUCLEOTIDE SEQUENCE [LARGE SCALE MRNA]</scope>
    <source>
        <strain>Hereford</strain>
        <tissue>Fetal skin</tissue>
    </source>
</reference>
<protein>
    <recommendedName>
        <fullName>Transmembrane protein 184C</fullName>
    </recommendedName>
    <alternativeName>
        <fullName>Transmembrane protein 34</fullName>
    </alternativeName>
</protein>
<dbReference type="EMBL" id="BC118282">
    <property type="protein sequence ID" value="AAI18283.1"/>
    <property type="molecule type" value="mRNA"/>
</dbReference>
<dbReference type="RefSeq" id="NP_001068648.1">
    <property type="nucleotide sequence ID" value="NM_001075180.1"/>
</dbReference>
<dbReference type="FunCoup" id="Q17QL9">
    <property type="interactions" value="3271"/>
</dbReference>
<dbReference type="STRING" id="9913.ENSBTAP00000013696"/>
<dbReference type="PaxDb" id="9913-ENSBTAP00000013696"/>
<dbReference type="GeneID" id="504966"/>
<dbReference type="KEGG" id="bta:504966"/>
<dbReference type="CTD" id="55751"/>
<dbReference type="eggNOG" id="KOG2641">
    <property type="taxonomic scope" value="Eukaryota"/>
</dbReference>
<dbReference type="HOGENOM" id="CLU_012923_1_1_1"/>
<dbReference type="InParanoid" id="Q17QL9"/>
<dbReference type="OrthoDB" id="5348404at2759"/>
<dbReference type="Proteomes" id="UP000009136">
    <property type="component" value="Unplaced"/>
</dbReference>
<dbReference type="GO" id="GO:0016020">
    <property type="term" value="C:membrane"/>
    <property type="evidence" value="ECO:0000318"/>
    <property type="project" value="GO_Central"/>
</dbReference>
<dbReference type="GO" id="GO:0022857">
    <property type="term" value="F:transmembrane transporter activity"/>
    <property type="evidence" value="ECO:0000318"/>
    <property type="project" value="GO_Central"/>
</dbReference>
<dbReference type="InterPro" id="IPR005178">
    <property type="entry name" value="Ostalpha/TMEM184C"/>
</dbReference>
<dbReference type="PANTHER" id="PTHR23423">
    <property type="entry name" value="ORGANIC SOLUTE TRANSPORTER-RELATED"/>
    <property type="match status" value="1"/>
</dbReference>
<dbReference type="Pfam" id="PF03619">
    <property type="entry name" value="Solute_trans_a"/>
    <property type="match status" value="1"/>
</dbReference>
<dbReference type="SMART" id="SM01417">
    <property type="entry name" value="Solute_trans_a"/>
    <property type="match status" value="1"/>
</dbReference>
<accession>Q17QL9</accession>
<keyword id="KW-0472">Membrane</keyword>
<keyword id="KW-1185">Reference proteome</keyword>
<keyword id="KW-0812">Transmembrane</keyword>
<keyword id="KW-1133">Transmembrane helix</keyword>
<comment type="function">
    <text evidence="1">Possible tumor suppressor which may play a role in cell growth.</text>
</comment>
<comment type="subcellular location">
    <subcellularLocation>
        <location evidence="4">Membrane</location>
        <topology evidence="4">Multi-pass membrane protein</topology>
    </subcellularLocation>
</comment>
<comment type="similarity">
    <text evidence="4">Belongs to the TMEM184 family.</text>
</comment>
<feature type="chain" id="PRO_0000287566" description="Transmembrane protein 184C">
    <location>
        <begin position="1"/>
        <end position="438"/>
    </location>
</feature>
<feature type="transmembrane region" description="Helical" evidence="2">
    <location>
        <begin position="17"/>
        <end position="37"/>
    </location>
</feature>
<feature type="transmembrane region" description="Helical" evidence="2">
    <location>
        <begin position="48"/>
        <end position="68"/>
    </location>
</feature>
<feature type="transmembrane region" description="Helical" evidence="2">
    <location>
        <begin position="86"/>
        <end position="106"/>
    </location>
</feature>
<feature type="transmembrane region" description="Helical" evidence="2">
    <location>
        <begin position="176"/>
        <end position="196"/>
    </location>
</feature>
<feature type="transmembrane region" description="Helical" evidence="2">
    <location>
        <begin position="212"/>
        <end position="232"/>
    </location>
</feature>
<feature type="transmembrane region" description="Helical" evidence="2">
    <location>
        <begin position="254"/>
        <end position="274"/>
    </location>
</feature>
<feature type="transmembrane region" description="Helical" evidence="2">
    <location>
        <begin position="287"/>
        <end position="307"/>
    </location>
</feature>
<feature type="region of interest" description="Disordered" evidence="3">
    <location>
        <begin position="358"/>
        <end position="438"/>
    </location>
</feature>
<feature type="compositionally biased region" description="Low complexity" evidence="3">
    <location>
        <begin position="374"/>
        <end position="390"/>
    </location>
</feature>
<feature type="compositionally biased region" description="Low complexity" evidence="3">
    <location>
        <begin position="404"/>
        <end position="413"/>
    </location>
</feature>
<feature type="compositionally biased region" description="Basic and acidic residues" evidence="3">
    <location>
        <begin position="426"/>
        <end position="438"/>
    </location>
</feature>
<sequence length="438" mass="50000">MPCTCTWRNWRQWIRPLAVVLYLLSIVVAVPLCVWELQKLEVGIHTKAWFIAGIFLLLTIPISLWVILQHLVHYTQPELQKPIIRILWMVPIYSLDSWIALKYPSIAIYVDTCRECYEAYVIYNFMGFLTNYLTNRYPNLVLIIEAKDQQKHFPPLCCCPPWTMGEVLLFRCKLGVLQYTVVRPFTTIIALVCELLDIYDEGNFSFSNAWTYLVIINNMSQLFAMYCLLLFYKVLKEELSPIQPVGKFLCVKLVVFVSFWQAVVIALLVKVGVISEKHTWEWQTVEAVATGLQDFIICIEMFLAAIAHHYTFSYKPYVQEAEEGSCFDSFLAMWDVSDIRDDISEQVRHVGRTVMGHPRKKFFPEDQDQNEHTSLLSSSSQDALSVASSVPPSPVGHYQGFGHTVTPQTTPTTANASDDTGNDAAGVREEPSEKPVAS</sequence>
<proteinExistence type="evidence at transcript level"/>
<name>T184C_BOVIN</name>
<gene>
    <name type="primary">TMEM184C</name>
    <name type="synonym">TMEM34</name>
</gene>
<evidence type="ECO:0000250" key="1"/>
<evidence type="ECO:0000255" key="2"/>
<evidence type="ECO:0000256" key="3">
    <source>
        <dbReference type="SAM" id="MobiDB-lite"/>
    </source>
</evidence>
<evidence type="ECO:0000305" key="4"/>
<organism>
    <name type="scientific">Bos taurus</name>
    <name type="common">Bovine</name>
    <dbReference type="NCBI Taxonomy" id="9913"/>
    <lineage>
        <taxon>Eukaryota</taxon>
        <taxon>Metazoa</taxon>
        <taxon>Chordata</taxon>
        <taxon>Craniata</taxon>
        <taxon>Vertebrata</taxon>
        <taxon>Euteleostomi</taxon>
        <taxon>Mammalia</taxon>
        <taxon>Eutheria</taxon>
        <taxon>Laurasiatheria</taxon>
        <taxon>Artiodactyla</taxon>
        <taxon>Ruminantia</taxon>
        <taxon>Pecora</taxon>
        <taxon>Bovidae</taxon>
        <taxon>Bovinae</taxon>
        <taxon>Bos</taxon>
    </lineage>
</organism>